<evidence type="ECO:0000250" key="1"/>
<evidence type="ECO:0000250" key="2">
    <source>
        <dbReference type="UniProtKB" id="Q8NFU5"/>
    </source>
</evidence>
<evidence type="ECO:0000250" key="3">
    <source>
        <dbReference type="UniProtKB" id="Q9UHH9"/>
    </source>
</evidence>
<evidence type="ECO:0000269" key="4">
    <source>
    </source>
</evidence>
<evidence type="ECO:0000269" key="5">
    <source>
    </source>
</evidence>
<evidence type="ECO:0000303" key="6">
    <source>
    </source>
</evidence>
<evidence type="ECO:0000305" key="7"/>
<feature type="chain" id="PRO_0000066879" description="Inositol hexakisphosphate kinase 2">
    <location>
        <begin position="1"/>
        <end position="425"/>
    </location>
</feature>
<feature type="binding site" evidence="2">
    <location>
        <begin position="206"/>
        <end position="208"/>
    </location>
    <ligand>
        <name>ATP</name>
        <dbReference type="ChEBI" id="CHEBI:30616"/>
    </ligand>
</feature>
<feature type="binding site" evidence="1">
    <location>
        <begin position="215"/>
        <end position="223"/>
    </location>
    <ligand>
        <name>substrate</name>
    </ligand>
</feature>
<feature type="binding site" evidence="2">
    <location>
        <position position="219"/>
    </location>
    <ligand>
        <name>ATP</name>
        <dbReference type="ChEBI" id="CHEBI:30616"/>
    </ligand>
</feature>
<feature type="binding site" evidence="2">
    <location>
        <position position="221"/>
    </location>
    <ligand>
        <name>substrate</name>
    </ligand>
</feature>
<feature type="binding site" evidence="2">
    <location>
        <begin position="235"/>
        <end position="242"/>
    </location>
    <ligand>
        <name>substrate</name>
    </ligand>
</feature>
<feature type="binding site" evidence="2">
    <location>
        <position position="382"/>
    </location>
    <ligand>
        <name>ATP</name>
        <dbReference type="ChEBI" id="CHEBI:30616"/>
    </ligand>
</feature>
<feature type="binding site" evidence="2">
    <location>
        <position position="385"/>
    </location>
    <ligand>
        <name>substrate</name>
    </ligand>
</feature>
<comment type="function">
    <text evidence="4">Converts inositol hexakisphosphate (InsP6) to diphosphoinositol pentakisphosphate (InsP7/PP-InsP5).</text>
</comment>
<comment type="catalytic activity">
    <reaction evidence="4">
        <text>1D-myo-inositol hexakisphosphate + ATP = 5-diphospho-1D-myo-inositol 1,2,3,4,6-pentakisphosphate + ADP</text>
        <dbReference type="Rhea" id="RHEA:12793"/>
        <dbReference type="ChEBI" id="CHEBI:30616"/>
        <dbReference type="ChEBI" id="CHEBI:58130"/>
        <dbReference type="ChEBI" id="CHEBI:58628"/>
        <dbReference type="ChEBI" id="CHEBI:456216"/>
    </reaction>
</comment>
<comment type="pathway">
    <text evidence="4">Phospholipid metabolism; phosphatidylinositol metabolism.</text>
</comment>
<comment type="subcellular location">
    <subcellularLocation>
        <location evidence="3">Nucleus</location>
    </subcellularLocation>
</comment>
<comment type="tissue specificity">
    <text evidence="5">Detected in kidney, intestine, liver and heart.</text>
</comment>
<comment type="similarity">
    <text evidence="7">Belongs to the inositol phosphokinase (IPK) family.</text>
</comment>
<comment type="caution">
    <text evidence="5">Was first identified because of its ability to stimulate Na(+)-dependent phosphate cotransport.</text>
</comment>
<protein>
    <recommendedName>
        <fullName>Inositol hexakisphosphate kinase 2</fullName>
        <shortName>InsP6 kinase 2</shortName>
        <ecNumber evidence="4">2.7.4.-</ecNumber>
    </recommendedName>
    <alternativeName>
        <fullName evidence="6">P(i)-uptake stimulator</fullName>
        <shortName evidence="6">PiUS</shortName>
    </alternativeName>
</protein>
<gene>
    <name type="primary">IP6K2</name>
    <name type="synonym">IHPK2</name>
</gene>
<keyword id="KW-0067">ATP-binding</keyword>
<keyword id="KW-0418">Kinase</keyword>
<keyword id="KW-0443">Lipid metabolism</keyword>
<keyword id="KW-0547">Nucleotide-binding</keyword>
<keyword id="KW-0539">Nucleus</keyword>
<keyword id="KW-1208">Phospholipid metabolism</keyword>
<keyword id="KW-1185">Reference proteome</keyword>
<keyword id="KW-0808">Transferase</keyword>
<name>IP6K2_RABIT</name>
<proteinExistence type="evidence at protein level"/>
<organism>
    <name type="scientific">Oryctolagus cuniculus</name>
    <name type="common">Rabbit</name>
    <dbReference type="NCBI Taxonomy" id="9986"/>
    <lineage>
        <taxon>Eukaryota</taxon>
        <taxon>Metazoa</taxon>
        <taxon>Chordata</taxon>
        <taxon>Craniata</taxon>
        <taxon>Vertebrata</taxon>
        <taxon>Euteleostomi</taxon>
        <taxon>Mammalia</taxon>
        <taxon>Eutheria</taxon>
        <taxon>Euarchontoglires</taxon>
        <taxon>Glires</taxon>
        <taxon>Lagomorpha</taxon>
        <taxon>Leporidae</taxon>
        <taxon>Oryctolagus</taxon>
    </lineage>
</organism>
<accession>Q95221</accession>
<reference key="1">
    <citation type="journal article" date="1997" name="J. Membr. Biol.">
        <title>Identification of a cDNA/protein leading to an increased Pi-uptake in Xenopus laevis oocytes.</title>
        <authorList>
            <person name="Norbis F."/>
            <person name="Boll M."/>
            <person name="Stange G."/>
            <person name="Markovich D."/>
            <person name="Verrey F."/>
            <person name="Biber J."/>
            <person name="Murer H."/>
        </authorList>
    </citation>
    <scope>NUCLEOTIDE SEQUENCE [MRNA]</scope>
    <scope>PRELIMINARY FUNCTION</scope>
    <scope>TISSUE SPECIFICITY</scope>
    <source>
        <strain>New Zealand</strain>
        <tissue>Small intestine</tissue>
    </source>
</reference>
<reference key="2">
    <citation type="journal article" date="1999" name="FEBS Lett.">
        <title>PiUS (Pi uptake stimulator) is an inositol hexakisphosphate kinase.</title>
        <authorList>
            <person name="Schell M.J."/>
            <person name="Letcher A.J."/>
            <person name="Brearley C.A."/>
            <person name="Biber J."/>
            <person name="Murer H."/>
            <person name="Irvine R.F."/>
        </authorList>
    </citation>
    <scope>FUNCTION</scope>
    <scope>CATALYTIC ACTIVITY</scope>
</reference>
<sequence>MSPAFRAMDVEPRTKGILLEPFVHQVGGHSCVLRFNETTLCKPLIPREHQFYETLPAEMRKFTPQYKGVVSVCFEEDEDRNLCLIAYPLKGDHGTVDLVDNSDCEPKSKVLRWTTKKHHVLESEKTPKEWVRQHRKEEKMKSHKLEEEFEWLKKSEVLYYSVEKKGNVSSQLKHYNPWSMKCHQQQLQRMKENAKHRNQYKFILLENLTSRYEVPCVLDLKMGTRQHGDDASEEKAANQIRKCQQSTSAVIGVRVCGMQVYQAGSGQLMFMNKYHGRKLSVQGFKEALFQFFHNGRYLRRELLGPVLKKLAELKAVLERQESYRFYSSSLLVIYDGKEWPEVALDSDAEDLEDLSEESADESAGAYAYKPIGASSVDVRMIDFAHTTCRLYGEDSVVHEGQDAGYIFGLQSLIDIVTEISEDSGE</sequence>
<dbReference type="EC" id="2.7.4.-" evidence="4"/>
<dbReference type="EMBL" id="U74297">
    <property type="protein sequence ID" value="AAB49289.1"/>
    <property type="molecule type" value="mRNA"/>
</dbReference>
<dbReference type="RefSeq" id="NP_001075846.1">
    <property type="nucleotide sequence ID" value="NM_001082377.1"/>
</dbReference>
<dbReference type="SMR" id="Q95221"/>
<dbReference type="FunCoup" id="Q95221">
    <property type="interactions" value="2034"/>
</dbReference>
<dbReference type="STRING" id="9986.ENSOCUP00000010692"/>
<dbReference type="PaxDb" id="9986-ENSOCUP00000018629"/>
<dbReference type="Ensembl" id="ENSOCUT00000012420.2">
    <property type="protein sequence ID" value="ENSOCUP00000010692.2"/>
    <property type="gene ID" value="ENSOCUG00000012420.4"/>
</dbReference>
<dbReference type="GeneID" id="100009233"/>
<dbReference type="KEGG" id="ocu:100009233"/>
<dbReference type="CTD" id="51447"/>
<dbReference type="eggNOG" id="KOG1620">
    <property type="taxonomic scope" value="Eukaryota"/>
</dbReference>
<dbReference type="GeneTree" id="ENSGT00940000156310"/>
<dbReference type="HOGENOM" id="CLU_014862_0_0_1"/>
<dbReference type="InParanoid" id="Q95221"/>
<dbReference type="OMA" id="WANKKTH"/>
<dbReference type="OrthoDB" id="2573163at2759"/>
<dbReference type="UniPathway" id="UPA00949"/>
<dbReference type="Proteomes" id="UP000001811">
    <property type="component" value="Chromosome 9"/>
</dbReference>
<dbReference type="Bgee" id="ENSOCUG00000012420">
    <property type="expression patterns" value="Expressed in embryo and 17 other cell types or tissues"/>
</dbReference>
<dbReference type="GO" id="GO:0030054">
    <property type="term" value="C:cell junction"/>
    <property type="evidence" value="ECO:0007669"/>
    <property type="project" value="Ensembl"/>
</dbReference>
<dbReference type="GO" id="GO:0005737">
    <property type="term" value="C:cytoplasm"/>
    <property type="evidence" value="ECO:0007669"/>
    <property type="project" value="TreeGrafter"/>
</dbReference>
<dbReference type="GO" id="GO:0001650">
    <property type="term" value="C:fibrillar center"/>
    <property type="evidence" value="ECO:0007669"/>
    <property type="project" value="Ensembl"/>
</dbReference>
<dbReference type="GO" id="GO:0005654">
    <property type="term" value="C:nucleoplasm"/>
    <property type="evidence" value="ECO:0007669"/>
    <property type="project" value="Ensembl"/>
</dbReference>
<dbReference type="GO" id="GO:0005524">
    <property type="term" value="F:ATP binding"/>
    <property type="evidence" value="ECO:0007669"/>
    <property type="project" value="UniProtKB-KW"/>
</dbReference>
<dbReference type="GO" id="GO:0097243">
    <property type="term" value="F:flavonoid binding"/>
    <property type="evidence" value="ECO:0000250"/>
    <property type="project" value="UniProtKB"/>
</dbReference>
<dbReference type="GO" id="GO:0000832">
    <property type="term" value="F:inositol hexakisphosphate 5-kinase activity"/>
    <property type="evidence" value="ECO:0000250"/>
    <property type="project" value="UniProtKB"/>
</dbReference>
<dbReference type="GO" id="GO:1905396">
    <property type="term" value="P:cellular response to flavonoid"/>
    <property type="evidence" value="ECO:0000250"/>
    <property type="project" value="UniProtKB"/>
</dbReference>
<dbReference type="GO" id="GO:0032958">
    <property type="term" value="P:inositol phosphate biosynthetic process"/>
    <property type="evidence" value="ECO:0007669"/>
    <property type="project" value="Ensembl"/>
</dbReference>
<dbReference type="GO" id="GO:0043647">
    <property type="term" value="P:inositol phosphate metabolic process"/>
    <property type="evidence" value="ECO:0000250"/>
    <property type="project" value="UniProtKB"/>
</dbReference>
<dbReference type="GO" id="GO:0030308">
    <property type="term" value="P:negative regulation of cell growth"/>
    <property type="evidence" value="ECO:0007669"/>
    <property type="project" value="Ensembl"/>
</dbReference>
<dbReference type="GO" id="GO:0046854">
    <property type="term" value="P:phosphatidylinositol phosphate biosynthetic process"/>
    <property type="evidence" value="ECO:0007669"/>
    <property type="project" value="Ensembl"/>
</dbReference>
<dbReference type="GO" id="GO:0043065">
    <property type="term" value="P:positive regulation of apoptotic process"/>
    <property type="evidence" value="ECO:0007669"/>
    <property type="project" value="Ensembl"/>
</dbReference>
<dbReference type="GO" id="GO:0050821">
    <property type="term" value="P:protein stabilization"/>
    <property type="evidence" value="ECO:0007669"/>
    <property type="project" value="Ensembl"/>
</dbReference>
<dbReference type="FunFam" id="3.30.470.160:FF:000002">
    <property type="entry name" value="Kinase"/>
    <property type="match status" value="1"/>
</dbReference>
<dbReference type="Gene3D" id="3.30.470.160">
    <property type="entry name" value="Inositol polyphosphate kinase"/>
    <property type="match status" value="1"/>
</dbReference>
<dbReference type="InterPro" id="IPR005522">
    <property type="entry name" value="IPK"/>
</dbReference>
<dbReference type="InterPro" id="IPR038286">
    <property type="entry name" value="IPK_sf"/>
</dbReference>
<dbReference type="PANTHER" id="PTHR12400:SF47">
    <property type="entry name" value="INOSITOL HEXAKISPHOSPHATE KINASE 2"/>
    <property type="match status" value="1"/>
</dbReference>
<dbReference type="PANTHER" id="PTHR12400">
    <property type="entry name" value="INOSITOL POLYPHOSPHATE KINASE"/>
    <property type="match status" value="1"/>
</dbReference>
<dbReference type="Pfam" id="PF03770">
    <property type="entry name" value="IPK"/>
    <property type="match status" value="1"/>
</dbReference>
<dbReference type="SUPFAM" id="SSF56104">
    <property type="entry name" value="SAICAR synthase-like"/>
    <property type="match status" value="1"/>
</dbReference>